<evidence type="ECO:0000250" key="1"/>
<evidence type="ECO:0000255" key="2"/>
<evidence type="ECO:0000255" key="3">
    <source>
        <dbReference type="PROSITE-ProRule" id="PRU10031"/>
    </source>
</evidence>
<evidence type="ECO:0000255" key="4">
    <source>
        <dbReference type="PROSITE-ProRule" id="PRU10032"/>
    </source>
</evidence>
<evidence type="ECO:0000269" key="5">
    <source>
    </source>
</evidence>
<evidence type="ECO:0000305" key="6"/>
<gene>
    <name type="primary">RPOT1-TOM</name>
</gene>
<accession>Q8L6J5</accession>
<accession>Q8L6K2</accession>
<name>RPO1B_TOBAC</name>
<feature type="transit peptide" description="Mitochondrion" evidence="2">
    <location>
        <begin position="1"/>
        <end position="21"/>
    </location>
</feature>
<feature type="chain" id="PRO_0000046033" description="DNA-directed RNA polymerase 1B, mitochondrial">
    <location>
        <begin position="22"/>
        <end position="1002"/>
    </location>
</feature>
<feature type="active site" evidence="1">
    <location>
        <position position="703"/>
    </location>
</feature>
<feature type="active site" evidence="1">
    <location>
        <position position="778"/>
    </location>
</feature>
<feature type="active site" evidence="1">
    <location>
        <position position="935"/>
    </location>
</feature>
<feature type="sequence conflict" description="In Ref. 1; CAC82574." evidence="6" ref="1">
    <original>D</original>
    <variation>N</variation>
    <location>
        <position position="502"/>
    </location>
</feature>
<dbReference type="EC" id="2.7.7.6"/>
<dbReference type="EMBL" id="AJ302018">
    <property type="protein sequence ID" value="CAC82574.2"/>
    <property type="molecule type" value="mRNA"/>
</dbReference>
<dbReference type="EMBL" id="AJ416571">
    <property type="protein sequence ID" value="CAC95022.1"/>
    <property type="molecule type" value="Genomic_DNA"/>
</dbReference>
<dbReference type="RefSeq" id="NP_001312318.1">
    <property type="nucleotide sequence ID" value="NM_001325389.1"/>
</dbReference>
<dbReference type="SMR" id="Q8L6J5"/>
<dbReference type="STRING" id="4097.Q8L6J5"/>
<dbReference type="PaxDb" id="4097-Q8L6J5"/>
<dbReference type="GeneID" id="107784816"/>
<dbReference type="KEGG" id="nta:107784816"/>
<dbReference type="OMA" id="WMWEWHT"/>
<dbReference type="OrthoDB" id="276422at2759"/>
<dbReference type="Proteomes" id="UP000084051">
    <property type="component" value="Unplaced"/>
</dbReference>
<dbReference type="GO" id="GO:0034245">
    <property type="term" value="C:mitochondrial DNA-directed RNA polymerase complex"/>
    <property type="evidence" value="ECO:0000318"/>
    <property type="project" value="GO_Central"/>
</dbReference>
<dbReference type="GO" id="GO:0009536">
    <property type="term" value="C:plastid"/>
    <property type="evidence" value="ECO:0007669"/>
    <property type="project" value="GOC"/>
</dbReference>
<dbReference type="GO" id="GO:0003677">
    <property type="term" value="F:DNA binding"/>
    <property type="evidence" value="ECO:0007669"/>
    <property type="project" value="InterPro"/>
</dbReference>
<dbReference type="GO" id="GO:0003899">
    <property type="term" value="F:DNA-directed RNA polymerase activity"/>
    <property type="evidence" value="ECO:0000318"/>
    <property type="project" value="GO_Central"/>
</dbReference>
<dbReference type="GO" id="GO:0006390">
    <property type="term" value="P:mitochondrial transcription"/>
    <property type="evidence" value="ECO:0000318"/>
    <property type="project" value="GO_Central"/>
</dbReference>
<dbReference type="FunFam" id="1.10.1320.10:FF:000001">
    <property type="entry name" value="DNA-directed RNA polymerase"/>
    <property type="match status" value="1"/>
</dbReference>
<dbReference type="FunFam" id="1.10.150.20:FF:000027">
    <property type="entry name" value="DNA-directed RNA polymerase"/>
    <property type="match status" value="1"/>
</dbReference>
<dbReference type="FunFam" id="1.10.287.260:FF:000001">
    <property type="entry name" value="DNA-directed RNA polymerase"/>
    <property type="match status" value="1"/>
</dbReference>
<dbReference type="FunFam" id="1.10.287.280:FF:000001">
    <property type="entry name" value="DNA-directed RNA polymerase"/>
    <property type="match status" value="1"/>
</dbReference>
<dbReference type="Gene3D" id="1.10.287.260">
    <property type="match status" value="1"/>
</dbReference>
<dbReference type="Gene3D" id="1.10.287.280">
    <property type="match status" value="1"/>
</dbReference>
<dbReference type="Gene3D" id="1.10.150.20">
    <property type="entry name" value="5' to 3' exonuclease, C-terminal subdomain"/>
    <property type="match status" value="1"/>
</dbReference>
<dbReference type="Gene3D" id="1.10.1320.10">
    <property type="entry name" value="DNA-directed RNA polymerase, N-terminal domain"/>
    <property type="match status" value="1"/>
</dbReference>
<dbReference type="InterPro" id="IPR024075">
    <property type="entry name" value="DNA-dir_RNA_pol_helix_hairp_sf"/>
</dbReference>
<dbReference type="InterPro" id="IPR046950">
    <property type="entry name" value="DNA-dir_Rpol_C_phage-type"/>
</dbReference>
<dbReference type="InterPro" id="IPR002092">
    <property type="entry name" value="DNA-dir_Rpol_phage-type"/>
</dbReference>
<dbReference type="InterPro" id="IPR043502">
    <property type="entry name" value="DNA/RNA_pol_sf"/>
</dbReference>
<dbReference type="InterPro" id="IPR037159">
    <property type="entry name" value="RNA_POL_N_sf"/>
</dbReference>
<dbReference type="InterPro" id="IPR029262">
    <property type="entry name" value="RPOL_N"/>
</dbReference>
<dbReference type="PANTHER" id="PTHR10102:SF27">
    <property type="entry name" value="DNA-DIRECTED RNA POLYMERASE 1B, MITOCHONDRIAL"/>
    <property type="match status" value="1"/>
</dbReference>
<dbReference type="PANTHER" id="PTHR10102">
    <property type="entry name" value="DNA-DIRECTED RNA POLYMERASE, MITOCHONDRIAL"/>
    <property type="match status" value="1"/>
</dbReference>
<dbReference type="Pfam" id="PF00940">
    <property type="entry name" value="RNA_pol"/>
    <property type="match status" value="1"/>
</dbReference>
<dbReference type="Pfam" id="PF14700">
    <property type="entry name" value="RPOL_N"/>
    <property type="match status" value="1"/>
</dbReference>
<dbReference type="SMART" id="SM01311">
    <property type="entry name" value="RPOL_N"/>
    <property type="match status" value="1"/>
</dbReference>
<dbReference type="SUPFAM" id="SSF56672">
    <property type="entry name" value="DNA/RNA polymerases"/>
    <property type="match status" value="1"/>
</dbReference>
<dbReference type="PROSITE" id="PS00900">
    <property type="entry name" value="RNA_POL_PHAGE_1"/>
    <property type="match status" value="1"/>
</dbReference>
<dbReference type="PROSITE" id="PS00489">
    <property type="entry name" value="RNA_POL_PHAGE_2"/>
    <property type="match status" value="1"/>
</dbReference>
<comment type="function">
    <text>DNA-dependent RNA polymerase catalyzes the transcription of DNA into RNA using the four ribonucleoside triphosphates as substrates.</text>
</comment>
<comment type="catalytic activity">
    <reaction evidence="3 4">
        <text>RNA(n) + a ribonucleoside 5'-triphosphate = RNA(n+1) + diphosphate</text>
        <dbReference type="Rhea" id="RHEA:21248"/>
        <dbReference type="Rhea" id="RHEA-COMP:14527"/>
        <dbReference type="Rhea" id="RHEA-COMP:17342"/>
        <dbReference type="ChEBI" id="CHEBI:33019"/>
        <dbReference type="ChEBI" id="CHEBI:61557"/>
        <dbReference type="ChEBI" id="CHEBI:140395"/>
        <dbReference type="EC" id="2.7.7.6"/>
    </reaction>
</comment>
<comment type="subcellular location">
    <subcellularLocation>
        <location evidence="5">Mitochondrion</location>
    </subcellularLocation>
</comment>
<comment type="similarity">
    <text evidence="6">Belongs to the phage and mitochondrial RNA polymerase family.</text>
</comment>
<keyword id="KW-0240">DNA-directed RNA polymerase</keyword>
<keyword id="KW-0496">Mitochondrion</keyword>
<keyword id="KW-0548">Nucleotidyltransferase</keyword>
<keyword id="KW-1185">Reference proteome</keyword>
<keyword id="KW-0804">Transcription</keyword>
<keyword id="KW-0808">Transferase</keyword>
<keyword id="KW-0809">Transit peptide</keyword>
<reference key="1">
    <citation type="journal article" date="2002" name="Plant J.">
        <title>Six active phage-type RNA polymerase genes in Nicotiana tabacum.</title>
        <authorList>
            <person name="Hedtke B."/>
            <person name="Legen J."/>
            <person name="Weihe A."/>
            <person name="Herrmann R.G."/>
            <person name="Boerner T."/>
        </authorList>
    </citation>
    <scope>NUCLEOTIDE SEQUENCE [GENOMIC DNA / MRNA]</scope>
    <scope>SUBCELLULAR LOCATION</scope>
</reference>
<protein>
    <recommendedName>
        <fullName>DNA-directed RNA polymerase 1B, mitochondrial</fullName>
        <ecNumber>2.7.7.6</ecNumber>
    </recommendedName>
    <alternativeName>
        <fullName>NictaRpoT1-tom</fullName>
    </alternativeName>
    <alternativeName>
        <fullName>T7 bacteriophage-type single subunit RNA polymerase 1B</fullName>
    </alternativeName>
</protein>
<proteinExistence type="evidence at transcript level"/>
<organism>
    <name type="scientific">Nicotiana tabacum</name>
    <name type="common">Common tobacco</name>
    <dbReference type="NCBI Taxonomy" id="4097"/>
    <lineage>
        <taxon>Eukaryota</taxon>
        <taxon>Viridiplantae</taxon>
        <taxon>Streptophyta</taxon>
        <taxon>Embryophyta</taxon>
        <taxon>Tracheophyta</taxon>
        <taxon>Spermatophyta</taxon>
        <taxon>Magnoliopsida</taxon>
        <taxon>eudicotyledons</taxon>
        <taxon>Gunneridae</taxon>
        <taxon>Pentapetalae</taxon>
        <taxon>asterids</taxon>
        <taxon>lamiids</taxon>
        <taxon>Solanales</taxon>
        <taxon>Solanaceae</taxon>
        <taxon>Nicotianoideae</taxon>
        <taxon>Nicotianeae</taxon>
        <taxon>Nicotiana</taxon>
    </lineage>
</organism>
<sequence>MWRYISKHAYSRKFRNSHDSALLGFSQYSSSFGKTRPLQCLCEESTTHPNLGLSQNSIFSRISRKVRHLEGICEESSKNPHLGLSQNSTFSSVKGDFRICGKRGSGSLGRLRSYGSAAEAIVSTSEEDIDEIQELIEEMDKENEALKANLQPKQPKTIGGMGVGKYNFLRRRQIKVETEAWEEAAKEYQELLMDMCEQKLAPNLPYMKSLFLGWFEPLRDAIAAEQKLCDEGKNRGAYAPFFDQLPAEMMAVITMHKLMGLLMTGGGTGSARVVQAASYIGEAIEHEARIHRFLEKTKKSNALSGDLEETPGDMMKERERLRKKVKILMKKQKLRQVRKIVKQQDDEKPWGQDNLVKVGCRLIQILMETAYIQPPNDQLDDGPPDIRPAFVHTLKTVETMKGSRRYGVIQCDPLVRKGLDKTARHMVIPYMPMLVPPQSWLGYDKGGYLFLPSYIMRTHGAKQQREAVKRVPKKQLEPVFQALDTLGNTKWRVNRKVLGIVDRIWASGGRLADLVDREDVPLPEAPDTEDEAEIRKWKWKVKGVKKENCERHSQRCDIELKLAVARKMKDEDGFYYPHNLDFRGRAYPMHPYLNHLGSDLCRGILEFAEGRPLGTSGLRWLKIHLANVYGGGVDKLSYEGRVAFSENHLEDIFDSAERPLEGKRWWLGAEDPFQCLATCINIAEALRSPSPETAISYMPIHQDGSCNGLQHYAALGRDKLGAAAVNLVAGDKPADVYSGIAARVLDIMKRDAAKDPANDPNVMRARLLINQVDRKLVKQTVMTSVYGVTYIGARDQIKKRLKERGVIEDDNELFAAACYAAKTTLTALGEMFEAARSIMSWLGDCAKIIAMENHPVRWTTPLGLPVVQPYRKLGRHLIKTSLQILTLQRETDKVMVKRQRTAFPPNFVHSLDGSHMMMTAIACKESGLSFAGVHDSYWTHACDVDQMNKILREKFVELYDAPILENLLESFQQSFPDLQFPPLPERGDFDLREVLESPYFFN</sequence>